<sequence length="336" mass="37174">MIEADRLISAGTTLPEDVADRAIRPKLLEEYVGQPQVRSQMEIFIKAAKLRGDALDHLLIFGPPGLGKTTLANIVANEMGVNLRTTSGPVLEKAGDLAAMLTNLEPHDVLFIDEIHRLSPVVEEVLYPAMEDYQLDIMIGEGPAARSIKIDLPPFTLIGATTRAGSLTSPLRDRFGIVQRLEFYQVPDLQYIVSRSARFMGLEMSDDGALEVARRARGTPRIANRLLRRVRDFAEVKHDGTISADIAAQALDMLNVDAEGFDYMDRKLLLAVIDKFFGGPVGLDNLAAAIGEERETIEDVLEPYLIQQGFLQRTPRGRMATTRAWNHFGITPPEMP</sequence>
<reference key="1">
    <citation type="journal article" date="2011" name="Proc. Natl. Acad. Sci. U.S.A.">
        <title>Genomic anatomy of Escherichia coli O157:H7 outbreaks.</title>
        <authorList>
            <person name="Eppinger M."/>
            <person name="Mammel M.K."/>
            <person name="Leclerc J.E."/>
            <person name="Ravel J."/>
            <person name="Cebula T.A."/>
        </authorList>
    </citation>
    <scope>NUCLEOTIDE SEQUENCE [LARGE SCALE GENOMIC DNA]</scope>
    <source>
        <strain>EC4115 / EHEC</strain>
    </source>
</reference>
<protein>
    <recommendedName>
        <fullName evidence="1">Holliday junction branch migration complex subunit RuvB</fullName>
        <ecNumber evidence="1">3.6.4.-</ecNumber>
    </recommendedName>
</protein>
<organism>
    <name type="scientific">Escherichia coli O157:H7 (strain EC4115 / EHEC)</name>
    <dbReference type="NCBI Taxonomy" id="444450"/>
    <lineage>
        <taxon>Bacteria</taxon>
        <taxon>Pseudomonadati</taxon>
        <taxon>Pseudomonadota</taxon>
        <taxon>Gammaproteobacteria</taxon>
        <taxon>Enterobacterales</taxon>
        <taxon>Enterobacteriaceae</taxon>
        <taxon>Escherichia</taxon>
    </lineage>
</organism>
<evidence type="ECO:0000255" key="1">
    <source>
        <dbReference type="HAMAP-Rule" id="MF_00016"/>
    </source>
</evidence>
<keyword id="KW-0067">ATP-binding</keyword>
<keyword id="KW-0963">Cytoplasm</keyword>
<keyword id="KW-0227">DNA damage</keyword>
<keyword id="KW-0233">DNA recombination</keyword>
<keyword id="KW-0234">DNA repair</keyword>
<keyword id="KW-0238">DNA-binding</keyword>
<keyword id="KW-0378">Hydrolase</keyword>
<keyword id="KW-0547">Nucleotide-binding</keyword>
<keyword id="KW-0742">SOS response</keyword>
<proteinExistence type="inferred from homology"/>
<comment type="function">
    <text evidence="1">The RuvA-RuvB-RuvC complex processes Holliday junction (HJ) DNA during genetic recombination and DNA repair, while the RuvA-RuvB complex plays an important role in the rescue of blocked DNA replication forks via replication fork reversal (RFR). RuvA specifically binds to HJ cruciform DNA, conferring on it an open structure. The RuvB hexamer acts as an ATP-dependent pump, pulling dsDNA into and through the RuvAB complex. RuvB forms 2 homohexamers on either side of HJ DNA bound by 1 or 2 RuvA tetramers; 4 subunits per hexamer contact DNA at a time. Coordinated motions by a converter formed by DNA-disengaged RuvB subunits stimulates ATP hydrolysis and nucleotide exchange. Immobilization of the converter enables RuvB to convert the ATP-contained energy into a lever motion, pulling 2 nucleotides of DNA out of the RuvA tetramer per ATP hydrolyzed, thus driving DNA branch migration. The RuvB motors rotate together with the DNA substrate, which together with the progressing nucleotide cycle form the mechanistic basis for DNA recombination by continuous HJ branch migration. Branch migration allows RuvC to scan DNA until it finds its consensus sequence, where it cleaves and resolves cruciform DNA.</text>
</comment>
<comment type="catalytic activity">
    <reaction evidence="1">
        <text>ATP + H2O = ADP + phosphate + H(+)</text>
        <dbReference type="Rhea" id="RHEA:13065"/>
        <dbReference type="ChEBI" id="CHEBI:15377"/>
        <dbReference type="ChEBI" id="CHEBI:15378"/>
        <dbReference type="ChEBI" id="CHEBI:30616"/>
        <dbReference type="ChEBI" id="CHEBI:43474"/>
        <dbReference type="ChEBI" id="CHEBI:456216"/>
    </reaction>
</comment>
<comment type="subunit">
    <text evidence="1">Homohexamer. Forms an RuvA(8)-RuvB(12)-Holliday junction (HJ) complex. HJ DNA is sandwiched between 2 RuvA tetramers; dsDNA enters through RuvA and exits via RuvB. An RuvB hexamer assembles on each DNA strand where it exits the tetramer. Each RuvB hexamer is contacted by two RuvA subunits (via domain III) on 2 adjacent RuvB subunits; this complex drives branch migration. In the full resolvosome a probable DNA-RuvA(4)-RuvB(12)-RuvC(2) complex forms which resolves the HJ.</text>
</comment>
<comment type="subcellular location">
    <subcellularLocation>
        <location evidence="1">Cytoplasm</location>
    </subcellularLocation>
</comment>
<comment type="domain">
    <text evidence="1">Has 3 domains, the large (RuvB-L) and small ATPase (RuvB-S) domains and the C-terminal head (RuvB-H) domain. The head domain binds DNA, while the ATPase domains jointly bind ATP, ADP or are empty depending on the state of the subunit in the translocation cycle. During a single DNA translocation step the structure of each domain remains the same, but their relative positions change.</text>
</comment>
<comment type="similarity">
    <text evidence="1">Belongs to the RuvB family.</text>
</comment>
<name>RUVB_ECO5E</name>
<feature type="chain" id="PRO_1000089640" description="Holliday junction branch migration complex subunit RuvB">
    <location>
        <begin position="1"/>
        <end position="336"/>
    </location>
</feature>
<feature type="region of interest" description="Large ATPase domain (RuvB-L)" evidence="1">
    <location>
        <begin position="4"/>
        <end position="184"/>
    </location>
</feature>
<feature type="region of interest" description="Small ATPAse domain (RuvB-S)" evidence="1">
    <location>
        <begin position="185"/>
        <end position="255"/>
    </location>
</feature>
<feature type="region of interest" description="Head domain (RuvB-H)" evidence="1">
    <location>
        <begin position="258"/>
        <end position="336"/>
    </location>
</feature>
<feature type="binding site" evidence="1">
    <location>
        <position position="23"/>
    </location>
    <ligand>
        <name>ATP</name>
        <dbReference type="ChEBI" id="CHEBI:30616"/>
    </ligand>
</feature>
<feature type="binding site" evidence="1">
    <location>
        <position position="24"/>
    </location>
    <ligand>
        <name>ATP</name>
        <dbReference type="ChEBI" id="CHEBI:30616"/>
    </ligand>
</feature>
<feature type="binding site" evidence="1">
    <location>
        <position position="65"/>
    </location>
    <ligand>
        <name>ATP</name>
        <dbReference type="ChEBI" id="CHEBI:30616"/>
    </ligand>
</feature>
<feature type="binding site" evidence="1">
    <location>
        <position position="68"/>
    </location>
    <ligand>
        <name>ATP</name>
        <dbReference type="ChEBI" id="CHEBI:30616"/>
    </ligand>
</feature>
<feature type="binding site" evidence="1">
    <location>
        <position position="69"/>
    </location>
    <ligand>
        <name>ATP</name>
        <dbReference type="ChEBI" id="CHEBI:30616"/>
    </ligand>
</feature>
<feature type="binding site" evidence="1">
    <location>
        <position position="69"/>
    </location>
    <ligand>
        <name>Mg(2+)</name>
        <dbReference type="ChEBI" id="CHEBI:18420"/>
    </ligand>
</feature>
<feature type="binding site" evidence="1">
    <location>
        <position position="70"/>
    </location>
    <ligand>
        <name>ATP</name>
        <dbReference type="ChEBI" id="CHEBI:30616"/>
    </ligand>
</feature>
<feature type="binding site" evidence="1">
    <location>
        <begin position="131"/>
        <end position="133"/>
    </location>
    <ligand>
        <name>ATP</name>
        <dbReference type="ChEBI" id="CHEBI:30616"/>
    </ligand>
</feature>
<feature type="binding site" evidence="1">
    <location>
        <position position="174"/>
    </location>
    <ligand>
        <name>ATP</name>
        <dbReference type="ChEBI" id="CHEBI:30616"/>
    </ligand>
</feature>
<feature type="binding site" evidence="1">
    <location>
        <position position="184"/>
    </location>
    <ligand>
        <name>ATP</name>
        <dbReference type="ChEBI" id="CHEBI:30616"/>
    </ligand>
</feature>
<feature type="binding site" evidence="1">
    <location>
        <position position="221"/>
    </location>
    <ligand>
        <name>ATP</name>
        <dbReference type="ChEBI" id="CHEBI:30616"/>
    </ligand>
</feature>
<feature type="binding site" evidence="1">
    <location>
        <position position="294"/>
    </location>
    <ligand>
        <name>DNA</name>
        <dbReference type="ChEBI" id="CHEBI:16991"/>
    </ligand>
</feature>
<feature type="binding site" evidence="1">
    <location>
        <position position="313"/>
    </location>
    <ligand>
        <name>DNA</name>
        <dbReference type="ChEBI" id="CHEBI:16991"/>
    </ligand>
</feature>
<feature type="binding site" evidence="1">
    <location>
        <position position="318"/>
    </location>
    <ligand>
        <name>DNA</name>
        <dbReference type="ChEBI" id="CHEBI:16991"/>
    </ligand>
</feature>
<dbReference type="EC" id="3.6.4.-" evidence="1"/>
<dbReference type="EMBL" id="CP001164">
    <property type="protein sequence ID" value="ACI37896.1"/>
    <property type="molecule type" value="Genomic_DNA"/>
</dbReference>
<dbReference type="RefSeq" id="WP_000568519.1">
    <property type="nucleotide sequence ID" value="NC_011353.1"/>
</dbReference>
<dbReference type="SMR" id="B5YR05"/>
<dbReference type="GeneID" id="75202735"/>
<dbReference type="KEGG" id="ecf:ECH74115_2596"/>
<dbReference type="HOGENOM" id="CLU_055599_1_0_6"/>
<dbReference type="GO" id="GO:0005737">
    <property type="term" value="C:cytoplasm"/>
    <property type="evidence" value="ECO:0007669"/>
    <property type="project" value="UniProtKB-SubCell"/>
</dbReference>
<dbReference type="GO" id="GO:0048476">
    <property type="term" value="C:Holliday junction resolvase complex"/>
    <property type="evidence" value="ECO:0007669"/>
    <property type="project" value="UniProtKB-UniRule"/>
</dbReference>
<dbReference type="GO" id="GO:0005524">
    <property type="term" value="F:ATP binding"/>
    <property type="evidence" value="ECO:0007669"/>
    <property type="project" value="UniProtKB-UniRule"/>
</dbReference>
<dbReference type="GO" id="GO:0016887">
    <property type="term" value="F:ATP hydrolysis activity"/>
    <property type="evidence" value="ECO:0007669"/>
    <property type="project" value="InterPro"/>
</dbReference>
<dbReference type="GO" id="GO:0000400">
    <property type="term" value="F:four-way junction DNA binding"/>
    <property type="evidence" value="ECO:0007669"/>
    <property type="project" value="UniProtKB-UniRule"/>
</dbReference>
<dbReference type="GO" id="GO:0009378">
    <property type="term" value="F:four-way junction helicase activity"/>
    <property type="evidence" value="ECO:0007669"/>
    <property type="project" value="InterPro"/>
</dbReference>
<dbReference type="GO" id="GO:0006310">
    <property type="term" value="P:DNA recombination"/>
    <property type="evidence" value="ECO:0007669"/>
    <property type="project" value="UniProtKB-UniRule"/>
</dbReference>
<dbReference type="GO" id="GO:0006281">
    <property type="term" value="P:DNA repair"/>
    <property type="evidence" value="ECO:0007669"/>
    <property type="project" value="UniProtKB-UniRule"/>
</dbReference>
<dbReference type="GO" id="GO:0009432">
    <property type="term" value="P:SOS response"/>
    <property type="evidence" value="ECO:0007669"/>
    <property type="project" value="UniProtKB-UniRule"/>
</dbReference>
<dbReference type="CDD" id="cd00009">
    <property type="entry name" value="AAA"/>
    <property type="match status" value="1"/>
</dbReference>
<dbReference type="FunFam" id="1.10.10.10:FF:000086">
    <property type="entry name" value="Holliday junction ATP-dependent DNA helicase RuvB"/>
    <property type="match status" value="1"/>
</dbReference>
<dbReference type="FunFam" id="1.10.8.60:FF:000023">
    <property type="entry name" value="Holliday junction ATP-dependent DNA helicase RuvB"/>
    <property type="match status" value="1"/>
</dbReference>
<dbReference type="FunFam" id="3.40.50.300:FF:000073">
    <property type="entry name" value="Holliday junction ATP-dependent DNA helicase RuvB"/>
    <property type="match status" value="1"/>
</dbReference>
<dbReference type="Gene3D" id="1.10.8.60">
    <property type="match status" value="1"/>
</dbReference>
<dbReference type="Gene3D" id="3.40.50.300">
    <property type="entry name" value="P-loop containing nucleotide triphosphate hydrolases"/>
    <property type="match status" value="1"/>
</dbReference>
<dbReference type="Gene3D" id="1.10.10.10">
    <property type="entry name" value="Winged helix-like DNA-binding domain superfamily/Winged helix DNA-binding domain"/>
    <property type="match status" value="1"/>
</dbReference>
<dbReference type="HAMAP" id="MF_00016">
    <property type="entry name" value="DNA_HJ_migration_RuvB"/>
    <property type="match status" value="1"/>
</dbReference>
<dbReference type="InterPro" id="IPR003593">
    <property type="entry name" value="AAA+_ATPase"/>
</dbReference>
<dbReference type="InterPro" id="IPR041445">
    <property type="entry name" value="AAA_lid_4"/>
</dbReference>
<dbReference type="InterPro" id="IPR004605">
    <property type="entry name" value="DNA_helicase_Holl-junc_RuvB"/>
</dbReference>
<dbReference type="InterPro" id="IPR027417">
    <property type="entry name" value="P-loop_NTPase"/>
</dbReference>
<dbReference type="InterPro" id="IPR008824">
    <property type="entry name" value="RuvB-like_N"/>
</dbReference>
<dbReference type="InterPro" id="IPR008823">
    <property type="entry name" value="RuvB_C"/>
</dbReference>
<dbReference type="InterPro" id="IPR036388">
    <property type="entry name" value="WH-like_DNA-bd_sf"/>
</dbReference>
<dbReference type="InterPro" id="IPR036390">
    <property type="entry name" value="WH_DNA-bd_sf"/>
</dbReference>
<dbReference type="NCBIfam" id="NF000868">
    <property type="entry name" value="PRK00080.1"/>
    <property type="match status" value="1"/>
</dbReference>
<dbReference type="NCBIfam" id="TIGR00635">
    <property type="entry name" value="ruvB"/>
    <property type="match status" value="1"/>
</dbReference>
<dbReference type="PANTHER" id="PTHR42848">
    <property type="match status" value="1"/>
</dbReference>
<dbReference type="PANTHER" id="PTHR42848:SF1">
    <property type="entry name" value="HOLLIDAY JUNCTION BRANCH MIGRATION COMPLEX SUBUNIT RUVB"/>
    <property type="match status" value="1"/>
</dbReference>
<dbReference type="Pfam" id="PF17864">
    <property type="entry name" value="AAA_lid_4"/>
    <property type="match status" value="1"/>
</dbReference>
<dbReference type="Pfam" id="PF05491">
    <property type="entry name" value="RuvB_C"/>
    <property type="match status" value="1"/>
</dbReference>
<dbReference type="Pfam" id="PF05496">
    <property type="entry name" value="RuvB_N"/>
    <property type="match status" value="1"/>
</dbReference>
<dbReference type="SMART" id="SM00382">
    <property type="entry name" value="AAA"/>
    <property type="match status" value="1"/>
</dbReference>
<dbReference type="SUPFAM" id="SSF52540">
    <property type="entry name" value="P-loop containing nucleoside triphosphate hydrolases"/>
    <property type="match status" value="1"/>
</dbReference>
<dbReference type="SUPFAM" id="SSF46785">
    <property type="entry name" value="Winged helix' DNA-binding domain"/>
    <property type="match status" value="1"/>
</dbReference>
<accession>B5YR05</accession>
<gene>
    <name evidence="1" type="primary">ruvB</name>
    <name type="ordered locus">ECH74115_2596</name>
</gene>